<accession>B8J7H0</accession>
<sequence>MTDHYPSPRALLDRYDLRAKKSWGQNFLGDEAVLDDIARLAAPRAGDAVLELGAGLGHLTARLLARGARVAAVERDRDMVRVLRGELGDRITLLEADAARLDYADLAARFGAAAAAGEGPRLAVVGNLPYHLTSPILFSILDQVAHVSRAVFLLQREVAERLAAPPASRDWGVLSVLLQREADVSVERIVPPGAFWPPPKVASAVLCALFRPPADAVADPARFRRLVKAGFGQRRKTLRNALGSAKLADPARLEAAFAAAGVDPGRRGETLTLAEWAALERTLG</sequence>
<gene>
    <name evidence="1" type="primary">rsmA</name>
    <name evidence="1" type="synonym">ksgA</name>
    <name type="ordered locus">A2cp1_3826</name>
</gene>
<evidence type="ECO:0000255" key="1">
    <source>
        <dbReference type="HAMAP-Rule" id="MF_00607"/>
    </source>
</evidence>
<name>RSMA_ANAD2</name>
<organism>
    <name type="scientific">Anaeromyxobacter dehalogenans (strain 2CP-1 / ATCC BAA-258)</name>
    <dbReference type="NCBI Taxonomy" id="455488"/>
    <lineage>
        <taxon>Bacteria</taxon>
        <taxon>Pseudomonadati</taxon>
        <taxon>Myxococcota</taxon>
        <taxon>Myxococcia</taxon>
        <taxon>Myxococcales</taxon>
        <taxon>Cystobacterineae</taxon>
        <taxon>Anaeromyxobacteraceae</taxon>
        <taxon>Anaeromyxobacter</taxon>
    </lineage>
</organism>
<keyword id="KW-0963">Cytoplasm</keyword>
<keyword id="KW-0489">Methyltransferase</keyword>
<keyword id="KW-0694">RNA-binding</keyword>
<keyword id="KW-0698">rRNA processing</keyword>
<keyword id="KW-0949">S-adenosyl-L-methionine</keyword>
<keyword id="KW-0808">Transferase</keyword>
<reference key="1">
    <citation type="submission" date="2009-01" db="EMBL/GenBank/DDBJ databases">
        <title>Complete sequence of Anaeromyxobacter dehalogenans 2CP-1.</title>
        <authorList>
            <person name="Lucas S."/>
            <person name="Copeland A."/>
            <person name="Lapidus A."/>
            <person name="Glavina del Rio T."/>
            <person name="Dalin E."/>
            <person name="Tice H."/>
            <person name="Bruce D."/>
            <person name="Goodwin L."/>
            <person name="Pitluck S."/>
            <person name="Saunders E."/>
            <person name="Brettin T."/>
            <person name="Detter J.C."/>
            <person name="Han C."/>
            <person name="Larimer F."/>
            <person name="Land M."/>
            <person name="Hauser L."/>
            <person name="Kyrpides N."/>
            <person name="Ovchinnikova G."/>
            <person name="Beliaev A.S."/>
            <person name="Richardson P."/>
        </authorList>
    </citation>
    <scope>NUCLEOTIDE SEQUENCE [LARGE SCALE GENOMIC DNA]</scope>
    <source>
        <strain>2CP-1 / ATCC BAA-258</strain>
    </source>
</reference>
<dbReference type="EC" id="2.1.1.182" evidence="1"/>
<dbReference type="EMBL" id="CP001359">
    <property type="protein sequence ID" value="ACL67150.1"/>
    <property type="molecule type" value="Genomic_DNA"/>
</dbReference>
<dbReference type="RefSeq" id="WP_012527718.1">
    <property type="nucleotide sequence ID" value="NC_011891.1"/>
</dbReference>
<dbReference type="SMR" id="B8J7H0"/>
<dbReference type="KEGG" id="acp:A2cp1_3826"/>
<dbReference type="HOGENOM" id="CLU_041220_0_1_7"/>
<dbReference type="Proteomes" id="UP000007089">
    <property type="component" value="Chromosome"/>
</dbReference>
<dbReference type="GO" id="GO:0005829">
    <property type="term" value="C:cytosol"/>
    <property type="evidence" value="ECO:0007669"/>
    <property type="project" value="TreeGrafter"/>
</dbReference>
<dbReference type="GO" id="GO:0052908">
    <property type="term" value="F:16S rRNA (adenine(1518)-N(6)/adenine(1519)-N(6))-dimethyltransferase activity"/>
    <property type="evidence" value="ECO:0007669"/>
    <property type="project" value="UniProtKB-EC"/>
</dbReference>
<dbReference type="GO" id="GO:0003723">
    <property type="term" value="F:RNA binding"/>
    <property type="evidence" value="ECO:0007669"/>
    <property type="project" value="UniProtKB-KW"/>
</dbReference>
<dbReference type="CDD" id="cd02440">
    <property type="entry name" value="AdoMet_MTases"/>
    <property type="match status" value="1"/>
</dbReference>
<dbReference type="Gene3D" id="1.10.8.100">
    <property type="entry name" value="Ribosomal RNA adenine dimethylase-like, domain 2"/>
    <property type="match status" value="1"/>
</dbReference>
<dbReference type="Gene3D" id="3.40.50.150">
    <property type="entry name" value="Vaccinia Virus protein VP39"/>
    <property type="match status" value="1"/>
</dbReference>
<dbReference type="HAMAP" id="MF_00607">
    <property type="entry name" value="16SrRNA_methyltr_A"/>
    <property type="match status" value="1"/>
</dbReference>
<dbReference type="InterPro" id="IPR001737">
    <property type="entry name" value="KsgA/Erm"/>
</dbReference>
<dbReference type="InterPro" id="IPR023165">
    <property type="entry name" value="rRNA_Ade_diMease-like_C"/>
</dbReference>
<dbReference type="InterPro" id="IPR020596">
    <property type="entry name" value="rRNA_Ade_Mease_Trfase_CS"/>
</dbReference>
<dbReference type="InterPro" id="IPR020598">
    <property type="entry name" value="rRNA_Ade_methylase_Trfase_N"/>
</dbReference>
<dbReference type="InterPro" id="IPR011530">
    <property type="entry name" value="rRNA_adenine_dimethylase"/>
</dbReference>
<dbReference type="InterPro" id="IPR029063">
    <property type="entry name" value="SAM-dependent_MTases_sf"/>
</dbReference>
<dbReference type="NCBIfam" id="TIGR00755">
    <property type="entry name" value="ksgA"/>
    <property type="match status" value="1"/>
</dbReference>
<dbReference type="PANTHER" id="PTHR11727">
    <property type="entry name" value="DIMETHYLADENOSINE TRANSFERASE"/>
    <property type="match status" value="1"/>
</dbReference>
<dbReference type="PANTHER" id="PTHR11727:SF7">
    <property type="entry name" value="DIMETHYLADENOSINE TRANSFERASE-RELATED"/>
    <property type="match status" value="1"/>
</dbReference>
<dbReference type="Pfam" id="PF00398">
    <property type="entry name" value="RrnaAD"/>
    <property type="match status" value="1"/>
</dbReference>
<dbReference type="SMART" id="SM00650">
    <property type="entry name" value="rADc"/>
    <property type="match status" value="1"/>
</dbReference>
<dbReference type="SUPFAM" id="SSF53335">
    <property type="entry name" value="S-adenosyl-L-methionine-dependent methyltransferases"/>
    <property type="match status" value="1"/>
</dbReference>
<dbReference type="PROSITE" id="PS01131">
    <property type="entry name" value="RRNA_A_DIMETH"/>
    <property type="match status" value="1"/>
</dbReference>
<dbReference type="PROSITE" id="PS51689">
    <property type="entry name" value="SAM_RNA_A_N6_MT"/>
    <property type="match status" value="1"/>
</dbReference>
<proteinExistence type="inferred from homology"/>
<feature type="chain" id="PRO_1000194376" description="Ribosomal RNA small subunit methyltransferase A">
    <location>
        <begin position="1"/>
        <end position="284"/>
    </location>
</feature>
<feature type="binding site" evidence="1">
    <location>
        <position position="26"/>
    </location>
    <ligand>
        <name>S-adenosyl-L-methionine</name>
        <dbReference type="ChEBI" id="CHEBI:59789"/>
    </ligand>
</feature>
<feature type="binding site" evidence="1">
    <location>
        <position position="28"/>
    </location>
    <ligand>
        <name>S-adenosyl-L-methionine</name>
        <dbReference type="ChEBI" id="CHEBI:59789"/>
    </ligand>
</feature>
<feature type="binding site" evidence="1">
    <location>
        <position position="53"/>
    </location>
    <ligand>
        <name>S-adenosyl-L-methionine</name>
        <dbReference type="ChEBI" id="CHEBI:59789"/>
    </ligand>
</feature>
<feature type="binding site" evidence="1">
    <location>
        <position position="74"/>
    </location>
    <ligand>
        <name>S-adenosyl-L-methionine</name>
        <dbReference type="ChEBI" id="CHEBI:59789"/>
    </ligand>
</feature>
<feature type="binding site" evidence="1">
    <location>
        <position position="97"/>
    </location>
    <ligand>
        <name>S-adenosyl-L-methionine</name>
        <dbReference type="ChEBI" id="CHEBI:59789"/>
    </ligand>
</feature>
<feature type="binding site" evidence="1">
    <location>
        <position position="127"/>
    </location>
    <ligand>
        <name>S-adenosyl-L-methionine</name>
        <dbReference type="ChEBI" id="CHEBI:59789"/>
    </ligand>
</feature>
<comment type="function">
    <text evidence="1">Specifically dimethylates two adjacent adenosines (A1518 and A1519) in the loop of a conserved hairpin near the 3'-end of 16S rRNA in the 30S particle. May play a critical role in biogenesis of 30S subunits.</text>
</comment>
<comment type="catalytic activity">
    <reaction evidence="1">
        <text>adenosine(1518)/adenosine(1519) in 16S rRNA + 4 S-adenosyl-L-methionine = N(6)-dimethyladenosine(1518)/N(6)-dimethyladenosine(1519) in 16S rRNA + 4 S-adenosyl-L-homocysteine + 4 H(+)</text>
        <dbReference type="Rhea" id="RHEA:19609"/>
        <dbReference type="Rhea" id="RHEA-COMP:10232"/>
        <dbReference type="Rhea" id="RHEA-COMP:10233"/>
        <dbReference type="ChEBI" id="CHEBI:15378"/>
        <dbReference type="ChEBI" id="CHEBI:57856"/>
        <dbReference type="ChEBI" id="CHEBI:59789"/>
        <dbReference type="ChEBI" id="CHEBI:74411"/>
        <dbReference type="ChEBI" id="CHEBI:74493"/>
        <dbReference type="EC" id="2.1.1.182"/>
    </reaction>
</comment>
<comment type="subcellular location">
    <subcellularLocation>
        <location evidence="1">Cytoplasm</location>
    </subcellularLocation>
</comment>
<comment type="similarity">
    <text evidence="1">Belongs to the class I-like SAM-binding methyltransferase superfamily. rRNA adenine N(6)-methyltransferase family. RsmA subfamily.</text>
</comment>
<protein>
    <recommendedName>
        <fullName evidence="1">Ribosomal RNA small subunit methyltransferase A</fullName>
        <ecNumber evidence="1">2.1.1.182</ecNumber>
    </recommendedName>
    <alternativeName>
        <fullName evidence="1">16S rRNA (adenine(1518)-N(6)/adenine(1519)-N(6))-dimethyltransferase</fullName>
    </alternativeName>
    <alternativeName>
        <fullName evidence="1">16S rRNA dimethyladenosine transferase</fullName>
    </alternativeName>
    <alternativeName>
        <fullName evidence="1">16S rRNA dimethylase</fullName>
    </alternativeName>
    <alternativeName>
        <fullName evidence="1">S-adenosylmethionine-6-N', N'-adenosyl(rRNA) dimethyltransferase</fullName>
    </alternativeName>
</protein>